<gene>
    <name evidence="1" type="primary">alaS</name>
    <name type="ordered locus">Spea_1196</name>
</gene>
<dbReference type="EC" id="6.1.1.7" evidence="1"/>
<dbReference type="EMBL" id="CP000851">
    <property type="protein sequence ID" value="ABV86523.1"/>
    <property type="molecule type" value="Genomic_DNA"/>
</dbReference>
<dbReference type="RefSeq" id="WP_012154450.1">
    <property type="nucleotide sequence ID" value="NC_009901.1"/>
</dbReference>
<dbReference type="SMR" id="A8H1T6"/>
<dbReference type="STRING" id="398579.Spea_1196"/>
<dbReference type="KEGG" id="spl:Spea_1196"/>
<dbReference type="eggNOG" id="COG0013">
    <property type="taxonomic scope" value="Bacteria"/>
</dbReference>
<dbReference type="HOGENOM" id="CLU_004485_1_1_6"/>
<dbReference type="OrthoDB" id="9803884at2"/>
<dbReference type="Proteomes" id="UP000002608">
    <property type="component" value="Chromosome"/>
</dbReference>
<dbReference type="GO" id="GO:0005829">
    <property type="term" value="C:cytosol"/>
    <property type="evidence" value="ECO:0007669"/>
    <property type="project" value="TreeGrafter"/>
</dbReference>
<dbReference type="GO" id="GO:0004813">
    <property type="term" value="F:alanine-tRNA ligase activity"/>
    <property type="evidence" value="ECO:0007669"/>
    <property type="project" value="UniProtKB-UniRule"/>
</dbReference>
<dbReference type="GO" id="GO:0002161">
    <property type="term" value="F:aminoacyl-tRNA deacylase activity"/>
    <property type="evidence" value="ECO:0007669"/>
    <property type="project" value="TreeGrafter"/>
</dbReference>
<dbReference type="GO" id="GO:0005524">
    <property type="term" value="F:ATP binding"/>
    <property type="evidence" value="ECO:0007669"/>
    <property type="project" value="UniProtKB-UniRule"/>
</dbReference>
<dbReference type="GO" id="GO:0000049">
    <property type="term" value="F:tRNA binding"/>
    <property type="evidence" value="ECO:0007669"/>
    <property type="project" value="UniProtKB-KW"/>
</dbReference>
<dbReference type="GO" id="GO:0008270">
    <property type="term" value="F:zinc ion binding"/>
    <property type="evidence" value="ECO:0007669"/>
    <property type="project" value="UniProtKB-UniRule"/>
</dbReference>
<dbReference type="GO" id="GO:0006419">
    <property type="term" value="P:alanyl-tRNA aminoacylation"/>
    <property type="evidence" value="ECO:0007669"/>
    <property type="project" value="UniProtKB-UniRule"/>
</dbReference>
<dbReference type="GO" id="GO:0045892">
    <property type="term" value="P:negative regulation of DNA-templated transcription"/>
    <property type="evidence" value="ECO:0007669"/>
    <property type="project" value="TreeGrafter"/>
</dbReference>
<dbReference type="CDD" id="cd00673">
    <property type="entry name" value="AlaRS_core"/>
    <property type="match status" value="1"/>
</dbReference>
<dbReference type="FunFam" id="2.40.30.130:FF:000001">
    <property type="entry name" value="Alanine--tRNA ligase"/>
    <property type="match status" value="1"/>
</dbReference>
<dbReference type="FunFam" id="3.10.310.40:FF:000001">
    <property type="entry name" value="Alanine--tRNA ligase"/>
    <property type="match status" value="1"/>
</dbReference>
<dbReference type="FunFam" id="3.30.54.20:FF:000001">
    <property type="entry name" value="Alanine--tRNA ligase"/>
    <property type="match status" value="1"/>
</dbReference>
<dbReference type="FunFam" id="3.30.930.10:FF:000004">
    <property type="entry name" value="Alanine--tRNA ligase"/>
    <property type="match status" value="1"/>
</dbReference>
<dbReference type="FunFam" id="3.30.980.10:FF:000004">
    <property type="entry name" value="Alanine--tRNA ligase, cytoplasmic"/>
    <property type="match status" value="1"/>
</dbReference>
<dbReference type="Gene3D" id="2.40.30.130">
    <property type="match status" value="1"/>
</dbReference>
<dbReference type="Gene3D" id="3.10.310.40">
    <property type="match status" value="1"/>
</dbReference>
<dbReference type="Gene3D" id="3.30.54.20">
    <property type="match status" value="1"/>
</dbReference>
<dbReference type="Gene3D" id="6.10.250.550">
    <property type="match status" value="1"/>
</dbReference>
<dbReference type="Gene3D" id="3.30.930.10">
    <property type="entry name" value="Bira Bifunctional Protein, Domain 2"/>
    <property type="match status" value="1"/>
</dbReference>
<dbReference type="Gene3D" id="3.30.980.10">
    <property type="entry name" value="Threonyl-trna Synthetase, Chain A, domain 2"/>
    <property type="match status" value="1"/>
</dbReference>
<dbReference type="HAMAP" id="MF_00036_B">
    <property type="entry name" value="Ala_tRNA_synth_B"/>
    <property type="match status" value="1"/>
</dbReference>
<dbReference type="InterPro" id="IPR045864">
    <property type="entry name" value="aa-tRNA-synth_II/BPL/LPL"/>
</dbReference>
<dbReference type="InterPro" id="IPR002318">
    <property type="entry name" value="Ala-tRNA-lgiase_IIc"/>
</dbReference>
<dbReference type="InterPro" id="IPR018162">
    <property type="entry name" value="Ala-tRNA-ligase_IIc_anticod-bd"/>
</dbReference>
<dbReference type="InterPro" id="IPR018165">
    <property type="entry name" value="Ala-tRNA-synth_IIc_core"/>
</dbReference>
<dbReference type="InterPro" id="IPR018164">
    <property type="entry name" value="Ala-tRNA-synth_IIc_N"/>
</dbReference>
<dbReference type="InterPro" id="IPR050058">
    <property type="entry name" value="Ala-tRNA_ligase"/>
</dbReference>
<dbReference type="InterPro" id="IPR023033">
    <property type="entry name" value="Ala_tRNA_ligase_euk/bac"/>
</dbReference>
<dbReference type="InterPro" id="IPR003156">
    <property type="entry name" value="DHHA1_dom"/>
</dbReference>
<dbReference type="InterPro" id="IPR018163">
    <property type="entry name" value="Thr/Ala-tRNA-synth_IIc_edit"/>
</dbReference>
<dbReference type="InterPro" id="IPR009000">
    <property type="entry name" value="Transl_B-barrel_sf"/>
</dbReference>
<dbReference type="InterPro" id="IPR012947">
    <property type="entry name" value="tRNA_SAD"/>
</dbReference>
<dbReference type="NCBIfam" id="TIGR00344">
    <property type="entry name" value="alaS"/>
    <property type="match status" value="1"/>
</dbReference>
<dbReference type="PANTHER" id="PTHR11777:SF9">
    <property type="entry name" value="ALANINE--TRNA LIGASE, CYTOPLASMIC"/>
    <property type="match status" value="1"/>
</dbReference>
<dbReference type="PANTHER" id="PTHR11777">
    <property type="entry name" value="ALANYL-TRNA SYNTHETASE"/>
    <property type="match status" value="1"/>
</dbReference>
<dbReference type="Pfam" id="PF02272">
    <property type="entry name" value="DHHA1"/>
    <property type="match status" value="1"/>
</dbReference>
<dbReference type="Pfam" id="PF01411">
    <property type="entry name" value="tRNA-synt_2c"/>
    <property type="match status" value="1"/>
</dbReference>
<dbReference type="Pfam" id="PF07973">
    <property type="entry name" value="tRNA_SAD"/>
    <property type="match status" value="1"/>
</dbReference>
<dbReference type="PRINTS" id="PR00980">
    <property type="entry name" value="TRNASYNTHALA"/>
</dbReference>
<dbReference type="SMART" id="SM00863">
    <property type="entry name" value="tRNA_SAD"/>
    <property type="match status" value="1"/>
</dbReference>
<dbReference type="SUPFAM" id="SSF55681">
    <property type="entry name" value="Class II aaRS and biotin synthetases"/>
    <property type="match status" value="1"/>
</dbReference>
<dbReference type="SUPFAM" id="SSF101353">
    <property type="entry name" value="Putative anticodon-binding domain of alanyl-tRNA synthetase (AlaRS)"/>
    <property type="match status" value="1"/>
</dbReference>
<dbReference type="SUPFAM" id="SSF55186">
    <property type="entry name" value="ThrRS/AlaRS common domain"/>
    <property type="match status" value="1"/>
</dbReference>
<dbReference type="SUPFAM" id="SSF50447">
    <property type="entry name" value="Translation proteins"/>
    <property type="match status" value="1"/>
</dbReference>
<dbReference type="PROSITE" id="PS50860">
    <property type="entry name" value="AA_TRNA_LIGASE_II_ALA"/>
    <property type="match status" value="1"/>
</dbReference>
<sequence length="875" mass="94927">MYQTTAALRSAFLEYFRTNGHQVVDSSSLVPANDPTLLFTNAGMNQFKDVFLGADKRSYSRATSSQRCVRAGGKHNDLDNVGYTARHHTFFEMLGNFSFGDYFKEEAIHFAWTFLTEELKLPKERLCVTIYDTDDEAFEIWNKKIGVAAENIIRIGDNKGAAYASDNFWQMGDTGPCGPCSEIFYDHGDHIWGGRPGTPEEDGDRFIEIWNIVFMQYNRQADGEMKPLPKPSVDTGMGIERIAAIMQGVHSNYEIDIFQALIKKAAAILGVTDLENKSLRVIADHIRSCAFLIADGVMPSNEGRGYVLRRIIRRAVRHGNKLGATESFFYKLVPTLIEVMGADAAKGLQETQAIVEKSLKAEEEQFARTLERGLGILDAALNELATNVLDGETAFKLYDTYGFPVDLTADVCRERDITVDEAGFEVAMAAQRSRAQAAGQFETDYNEGLIIDEQSGFTGYTDLNNQATVTAIFKAGESVDSIVAGDDVVIVLDNTPFYGESGGQCGDEGVLIADGIEFTVTDTQKYGQAIGHIGRVATGTVKVGQVVTANVDKKLRHRTELNHSVTHLLHAALRQVLGTHVSQKGSLVDPERLRFDFSHFEGVKAHELKEVEELVNTQIRRNHELTAEVMDIETAKEKGAMALFGEKYDSEVRVVTMGDFSIELCGGTHVGRTGDIGLFKITSEGGIAAGIRRIEAVTGAAAMAYVAKQQAQLEEAAALLKGDSASVVAKLKAQLDKTKLLEKELSQLKDKLAAATSADLAGEAVDVNGVKVLVKKLEGVDAGALRGLQDELKQKLQSGIVVLAIAGEDKVNMIVGVTKDLTGKVKAGELVASIAVQVGGKGGGRPDMAQAGGSQPENLDAALEQVIPWISAKLA</sequence>
<name>SYA_SHEPA</name>
<feature type="chain" id="PRO_0000347788" description="Alanine--tRNA ligase">
    <location>
        <begin position="1"/>
        <end position="875"/>
    </location>
</feature>
<feature type="binding site" evidence="1">
    <location>
        <position position="563"/>
    </location>
    <ligand>
        <name>Zn(2+)</name>
        <dbReference type="ChEBI" id="CHEBI:29105"/>
    </ligand>
</feature>
<feature type="binding site" evidence="1">
    <location>
        <position position="567"/>
    </location>
    <ligand>
        <name>Zn(2+)</name>
        <dbReference type="ChEBI" id="CHEBI:29105"/>
    </ligand>
</feature>
<feature type="binding site" evidence="1">
    <location>
        <position position="665"/>
    </location>
    <ligand>
        <name>Zn(2+)</name>
        <dbReference type="ChEBI" id="CHEBI:29105"/>
    </ligand>
</feature>
<feature type="binding site" evidence="1">
    <location>
        <position position="669"/>
    </location>
    <ligand>
        <name>Zn(2+)</name>
        <dbReference type="ChEBI" id="CHEBI:29105"/>
    </ligand>
</feature>
<evidence type="ECO:0000255" key="1">
    <source>
        <dbReference type="HAMAP-Rule" id="MF_00036"/>
    </source>
</evidence>
<protein>
    <recommendedName>
        <fullName evidence="1">Alanine--tRNA ligase</fullName>
        <ecNumber evidence="1">6.1.1.7</ecNumber>
    </recommendedName>
    <alternativeName>
        <fullName evidence="1">Alanyl-tRNA synthetase</fullName>
        <shortName evidence="1">AlaRS</shortName>
    </alternativeName>
</protein>
<comment type="function">
    <text evidence="1">Catalyzes the attachment of alanine to tRNA(Ala) in a two-step reaction: alanine is first activated by ATP to form Ala-AMP and then transferred to the acceptor end of tRNA(Ala). Also edits incorrectly charged Ser-tRNA(Ala) and Gly-tRNA(Ala) via its editing domain.</text>
</comment>
<comment type="catalytic activity">
    <reaction evidence="1">
        <text>tRNA(Ala) + L-alanine + ATP = L-alanyl-tRNA(Ala) + AMP + diphosphate</text>
        <dbReference type="Rhea" id="RHEA:12540"/>
        <dbReference type="Rhea" id="RHEA-COMP:9657"/>
        <dbReference type="Rhea" id="RHEA-COMP:9923"/>
        <dbReference type="ChEBI" id="CHEBI:30616"/>
        <dbReference type="ChEBI" id="CHEBI:33019"/>
        <dbReference type="ChEBI" id="CHEBI:57972"/>
        <dbReference type="ChEBI" id="CHEBI:78442"/>
        <dbReference type="ChEBI" id="CHEBI:78497"/>
        <dbReference type="ChEBI" id="CHEBI:456215"/>
        <dbReference type="EC" id="6.1.1.7"/>
    </reaction>
</comment>
<comment type="cofactor">
    <cofactor evidence="1">
        <name>Zn(2+)</name>
        <dbReference type="ChEBI" id="CHEBI:29105"/>
    </cofactor>
    <text evidence="1">Binds 1 zinc ion per subunit.</text>
</comment>
<comment type="subcellular location">
    <subcellularLocation>
        <location evidence="1">Cytoplasm</location>
    </subcellularLocation>
</comment>
<comment type="domain">
    <text evidence="1">Consists of three domains; the N-terminal catalytic domain, the editing domain and the C-terminal C-Ala domain. The editing domain removes incorrectly charged amino acids, while the C-Ala domain, along with tRNA(Ala), serves as a bridge to cooperatively bring together the editing and aminoacylation centers thus stimulating deacylation of misacylated tRNAs.</text>
</comment>
<comment type="similarity">
    <text evidence="1">Belongs to the class-II aminoacyl-tRNA synthetase family.</text>
</comment>
<accession>A8H1T6</accession>
<keyword id="KW-0030">Aminoacyl-tRNA synthetase</keyword>
<keyword id="KW-0067">ATP-binding</keyword>
<keyword id="KW-0963">Cytoplasm</keyword>
<keyword id="KW-0436">Ligase</keyword>
<keyword id="KW-0479">Metal-binding</keyword>
<keyword id="KW-0547">Nucleotide-binding</keyword>
<keyword id="KW-0648">Protein biosynthesis</keyword>
<keyword id="KW-1185">Reference proteome</keyword>
<keyword id="KW-0694">RNA-binding</keyword>
<keyword id="KW-0820">tRNA-binding</keyword>
<keyword id="KW-0862">Zinc</keyword>
<reference key="1">
    <citation type="submission" date="2007-10" db="EMBL/GenBank/DDBJ databases">
        <title>Complete sequence of Shewanella pealeana ATCC 700345.</title>
        <authorList>
            <consortium name="US DOE Joint Genome Institute"/>
            <person name="Copeland A."/>
            <person name="Lucas S."/>
            <person name="Lapidus A."/>
            <person name="Barry K."/>
            <person name="Glavina del Rio T."/>
            <person name="Dalin E."/>
            <person name="Tice H."/>
            <person name="Pitluck S."/>
            <person name="Chertkov O."/>
            <person name="Brettin T."/>
            <person name="Bruce D."/>
            <person name="Detter J.C."/>
            <person name="Han C."/>
            <person name="Schmutz J."/>
            <person name="Larimer F."/>
            <person name="Land M."/>
            <person name="Hauser L."/>
            <person name="Kyrpides N."/>
            <person name="Kim E."/>
            <person name="Zhao J.-S.Z."/>
            <person name="Manno D."/>
            <person name="Hawari J."/>
            <person name="Richardson P."/>
        </authorList>
    </citation>
    <scope>NUCLEOTIDE SEQUENCE [LARGE SCALE GENOMIC DNA]</scope>
    <source>
        <strain>ATCC 700345 / ANG-SQ1</strain>
    </source>
</reference>
<organism>
    <name type="scientific">Shewanella pealeana (strain ATCC 700345 / ANG-SQ1)</name>
    <dbReference type="NCBI Taxonomy" id="398579"/>
    <lineage>
        <taxon>Bacteria</taxon>
        <taxon>Pseudomonadati</taxon>
        <taxon>Pseudomonadota</taxon>
        <taxon>Gammaproteobacteria</taxon>
        <taxon>Alteromonadales</taxon>
        <taxon>Shewanellaceae</taxon>
        <taxon>Shewanella</taxon>
    </lineage>
</organism>
<proteinExistence type="inferred from homology"/>